<name>XPP3_MOUSE</name>
<organism>
    <name type="scientific">Mus musculus</name>
    <name type="common">Mouse</name>
    <dbReference type="NCBI Taxonomy" id="10090"/>
    <lineage>
        <taxon>Eukaryota</taxon>
        <taxon>Metazoa</taxon>
        <taxon>Chordata</taxon>
        <taxon>Craniata</taxon>
        <taxon>Vertebrata</taxon>
        <taxon>Euteleostomi</taxon>
        <taxon>Mammalia</taxon>
        <taxon>Eutheria</taxon>
        <taxon>Euarchontoglires</taxon>
        <taxon>Glires</taxon>
        <taxon>Rodentia</taxon>
        <taxon>Myomorpha</taxon>
        <taxon>Muroidea</taxon>
        <taxon>Muridae</taxon>
        <taxon>Murinae</taxon>
        <taxon>Mus</taxon>
        <taxon>Mus</taxon>
    </lineage>
</organism>
<dbReference type="EC" id="3.4.11.9"/>
<dbReference type="EMBL" id="AK088324">
    <property type="protein sequence ID" value="BAC40282.1"/>
    <property type="molecule type" value="mRNA"/>
</dbReference>
<dbReference type="EMBL" id="CH466550">
    <property type="protein sequence ID" value="EDL04573.1"/>
    <property type="molecule type" value="Genomic_DNA"/>
</dbReference>
<dbReference type="EMBL" id="CH466550">
    <property type="protein sequence ID" value="EDL04574.1"/>
    <property type="molecule type" value="Genomic_DNA"/>
</dbReference>
<dbReference type="EMBL" id="BC137569">
    <property type="protein sequence ID" value="AAI37570.1"/>
    <property type="molecule type" value="mRNA"/>
</dbReference>
<dbReference type="EMBL" id="BC144717">
    <property type="protein sequence ID" value="AAI44718.1"/>
    <property type="molecule type" value="mRNA"/>
</dbReference>
<dbReference type="CCDS" id="CCDS27668.1">
    <molecule id="B7ZMP1-2"/>
</dbReference>
<dbReference type="CCDS" id="CCDS84182.1">
    <molecule id="B7ZMP1-1"/>
</dbReference>
<dbReference type="RefSeq" id="NP_001334004.1">
    <molecule id="B7ZMP1-1"/>
    <property type="nucleotide sequence ID" value="NM_001347075.1"/>
</dbReference>
<dbReference type="RefSeq" id="NP_796284.1">
    <molecule id="B7ZMP1-2"/>
    <property type="nucleotide sequence ID" value="NM_177310.3"/>
</dbReference>
<dbReference type="SMR" id="B7ZMP1"/>
<dbReference type="BioGRID" id="236455">
    <property type="interactions" value="3"/>
</dbReference>
<dbReference type="FunCoup" id="B7ZMP1">
    <property type="interactions" value="2359"/>
</dbReference>
<dbReference type="STRING" id="10090.ENSMUSP00000132822"/>
<dbReference type="MEROPS" id="M24.026"/>
<dbReference type="GlyGen" id="B7ZMP1">
    <property type="glycosylation" value="1 site"/>
</dbReference>
<dbReference type="iPTMnet" id="B7ZMP1"/>
<dbReference type="PhosphoSitePlus" id="B7ZMP1"/>
<dbReference type="SwissPalm" id="B7ZMP1"/>
<dbReference type="jPOST" id="B7ZMP1"/>
<dbReference type="PaxDb" id="10090-ENSMUSP00000038331"/>
<dbReference type="PeptideAtlas" id="B7ZMP1"/>
<dbReference type="ProteomicsDB" id="299798">
    <molecule id="B7ZMP1-1"/>
</dbReference>
<dbReference type="ProteomicsDB" id="299799">
    <molecule id="B7ZMP1-2"/>
</dbReference>
<dbReference type="Pumba" id="B7ZMP1"/>
<dbReference type="Antibodypedia" id="259">
    <property type="antibodies" value="152 antibodies from 26 providers"/>
</dbReference>
<dbReference type="DNASU" id="321003"/>
<dbReference type="Ensembl" id="ENSMUST00000041609.11">
    <molecule id="B7ZMP1-2"/>
    <property type="protein sequence ID" value="ENSMUSP00000038331.5"/>
    <property type="gene ID" value="ENSMUSG00000022401.13"/>
</dbReference>
<dbReference type="Ensembl" id="ENSMUST00000163754.9">
    <molecule id="B7ZMP1-1"/>
    <property type="protein sequence ID" value="ENSMUSP00000132822.2"/>
    <property type="gene ID" value="ENSMUSG00000022401.13"/>
</dbReference>
<dbReference type="GeneID" id="321003"/>
<dbReference type="KEGG" id="mmu:321003"/>
<dbReference type="UCSC" id="uc007wwo.1">
    <molecule id="B7ZMP1-2"/>
    <property type="organism name" value="mouse"/>
</dbReference>
<dbReference type="UCSC" id="uc011zwj.1">
    <molecule id="B7ZMP1-1"/>
    <property type="organism name" value="mouse"/>
</dbReference>
<dbReference type="AGR" id="MGI:2445217"/>
<dbReference type="CTD" id="63929"/>
<dbReference type="MGI" id="MGI:2445217">
    <property type="gene designation" value="Xpnpep3"/>
</dbReference>
<dbReference type="VEuPathDB" id="HostDB:ENSMUSG00000022401"/>
<dbReference type="eggNOG" id="KOG2414">
    <property type="taxonomic scope" value="Eukaryota"/>
</dbReference>
<dbReference type="GeneTree" id="ENSGT00940000153657"/>
<dbReference type="HOGENOM" id="CLU_017266_1_1_1"/>
<dbReference type="InParanoid" id="B7ZMP1"/>
<dbReference type="OMA" id="DSYFWYL"/>
<dbReference type="OrthoDB" id="4215474at2759"/>
<dbReference type="PhylomeDB" id="B7ZMP1"/>
<dbReference type="TreeFam" id="TF314484"/>
<dbReference type="BioGRID-ORCS" id="321003">
    <property type="hits" value="0 hits in 60 CRISPR screens"/>
</dbReference>
<dbReference type="ChiTaRS" id="Xpnpep3">
    <property type="organism name" value="mouse"/>
</dbReference>
<dbReference type="PRO" id="PR:B7ZMP1"/>
<dbReference type="Proteomes" id="UP000000589">
    <property type="component" value="Chromosome 15"/>
</dbReference>
<dbReference type="RNAct" id="B7ZMP1">
    <property type="molecule type" value="protein"/>
</dbReference>
<dbReference type="Bgee" id="ENSMUSG00000022401">
    <property type="expression patterns" value="Expressed in manus and 216 other cell types or tissues"/>
</dbReference>
<dbReference type="ExpressionAtlas" id="B7ZMP1">
    <property type="expression patterns" value="baseline and differential"/>
</dbReference>
<dbReference type="GO" id="GO:0005829">
    <property type="term" value="C:cytosol"/>
    <property type="evidence" value="ECO:0007669"/>
    <property type="project" value="Ensembl"/>
</dbReference>
<dbReference type="GO" id="GO:0005739">
    <property type="term" value="C:mitochondrion"/>
    <property type="evidence" value="ECO:0000314"/>
    <property type="project" value="MGI"/>
</dbReference>
<dbReference type="GO" id="GO:0004177">
    <property type="term" value="F:aminopeptidase activity"/>
    <property type="evidence" value="ECO:0000266"/>
    <property type="project" value="MGI"/>
</dbReference>
<dbReference type="GO" id="GO:0030145">
    <property type="term" value="F:manganese ion binding"/>
    <property type="evidence" value="ECO:0007669"/>
    <property type="project" value="Ensembl"/>
</dbReference>
<dbReference type="GO" id="GO:0070006">
    <property type="term" value="F:metalloaminopeptidase activity"/>
    <property type="evidence" value="ECO:0007669"/>
    <property type="project" value="Ensembl"/>
</dbReference>
<dbReference type="GO" id="GO:0042803">
    <property type="term" value="F:protein homodimerization activity"/>
    <property type="evidence" value="ECO:0007669"/>
    <property type="project" value="Ensembl"/>
</dbReference>
<dbReference type="GO" id="GO:0003094">
    <property type="term" value="P:glomerular filtration"/>
    <property type="evidence" value="ECO:0000266"/>
    <property type="project" value="MGI"/>
</dbReference>
<dbReference type="GO" id="GO:0016485">
    <property type="term" value="P:protein processing"/>
    <property type="evidence" value="ECO:0000266"/>
    <property type="project" value="MGI"/>
</dbReference>
<dbReference type="CDD" id="cd01087">
    <property type="entry name" value="Prolidase"/>
    <property type="match status" value="1"/>
</dbReference>
<dbReference type="FunFam" id="3.40.350.10:FF:000013">
    <property type="entry name" value="probable Xaa-Pro aminopeptidase 3"/>
    <property type="match status" value="1"/>
</dbReference>
<dbReference type="FunFam" id="3.90.230.10:FF:000002">
    <property type="entry name" value="Xaa-Pro aminopeptidase 3"/>
    <property type="match status" value="1"/>
</dbReference>
<dbReference type="Gene3D" id="3.90.230.10">
    <property type="entry name" value="Creatinase/methionine aminopeptidase superfamily"/>
    <property type="match status" value="1"/>
</dbReference>
<dbReference type="Gene3D" id="3.40.350.10">
    <property type="entry name" value="Creatinase/prolidase N-terminal domain"/>
    <property type="match status" value="1"/>
</dbReference>
<dbReference type="InterPro" id="IPR007865">
    <property type="entry name" value="Aminopep_P_N"/>
</dbReference>
<dbReference type="InterPro" id="IPR029149">
    <property type="entry name" value="Creatin/AminoP/Spt16_N"/>
</dbReference>
<dbReference type="InterPro" id="IPR036005">
    <property type="entry name" value="Creatinase/aminopeptidase-like"/>
</dbReference>
<dbReference type="InterPro" id="IPR000994">
    <property type="entry name" value="Pept_M24"/>
</dbReference>
<dbReference type="InterPro" id="IPR052433">
    <property type="entry name" value="X-Pro_dipept-like"/>
</dbReference>
<dbReference type="PANTHER" id="PTHR43226">
    <property type="entry name" value="XAA-PRO AMINOPEPTIDASE 3"/>
    <property type="match status" value="1"/>
</dbReference>
<dbReference type="PANTHER" id="PTHR43226:SF4">
    <property type="entry name" value="XAA-PRO AMINOPEPTIDASE 3"/>
    <property type="match status" value="1"/>
</dbReference>
<dbReference type="Pfam" id="PF05195">
    <property type="entry name" value="AMP_N"/>
    <property type="match status" value="1"/>
</dbReference>
<dbReference type="Pfam" id="PF00557">
    <property type="entry name" value="Peptidase_M24"/>
    <property type="match status" value="1"/>
</dbReference>
<dbReference type="SMART" id="SM01011">
    <property type="entry name" value="AMP_N"/>
    <property type="match status" value="1"/>
</dbReference>
<dbReference type="SUPFAM" id="SSF55920">
    <property type="entry name" value="Creatinase/aminopeptidase"/>
    <property type="match status" value="1"/>
</dbReference>
<dbReference type="SUPFAM" id="SSF53092">
    <property type="entry name" value="Creatinase/prolidase N-terminal domain"/>
    <property type="match status" value="1"/>
</dbReference>
<feature type="transit peptide" description="Mitochondrion" evidence="2">
    <location>
        <begin position="1"/>
        <end position="31"/>
    </location>
</feature>
<feature type="chain" id="PRO_0000401208" description="Xaa-Pro aminopeptidase 3">
    <location>
        <begin position="32"/>
        <end position="506"/>
    </location>
</feature>
<feature type="region of interest" description="Interaction with TNFRSF1B" evidence="1">
    <location>
        <begin position="54"/>
        <end position="79"/>
    </location>
</feature>
<feature type="binding site" evidence="1">
    <location>
        <position position="300"/>
    </location>
    <ligand>
        <name>substrate</name>
    </ligand>
</feature>
<feature type="binding site" evidence="1">
    <location>
        <position position="331"/>
    </location>
    <ligand>
        <name>Mn(2+)</name>
        <dbReference type="ChEBI" id="CHEBI:29035"/>
        <label>2</label>
    </ligand>
</feature>
<feature type="binding site" evidence="1">
    <location>
        <position position="331"/>
    </location>
    <ligand>
        <name>substrate</name>
    </ligand>
</feature>
<feature type="binding site" evidence="1">
    <location>
        <position position="342"/>
    </location>
    <ligand>
        <name>Mn(2+)</name>
        <dbReference type="ChEBI" id="CHEBI:29035"/>
        <label>1</label>
    </ligand>
</feature>
<feature type="binding site" evidence="1">
    <location>
        <position position="342"/>
    </location>
    <ligand>
        <name>Mn(2+)</name>
        <dbReference type="ChEBI" id="CHEBI:29035"/>
        <label>2</label>
    </ligand>
</feature>
<feature type="binding site" evidence="1">
    <location>
        <position position="342"/>
    </location>
    <ligand>
        <name>substrate</name>
    </ligand>
</feature>
<feature type="binding site" evidence="1">
    <location>
        <position position="423"/>
    </location>
    <ligand>
        <name>Mn(2+)</name>
        <dbReference type="ChEBI" id="CHEBI:29035"/>
        <label>1</label>
    </ligand>
</feature>
<feature type="binding site" evidence="1">
    <location>
        <position position="423"/>
    </location>
    <ligand>
        <name>substrate</name>
    </ligand>
</feature>
<feature type="binding site" evidence="1">
    <location>
        <position position="430"/>
    </location>
    <ligand>
        <name>substrate</name>
    </ligand>
</feature>
<feature type="binding site" evidence="1">
    <location>
        <position position="450"/>
    </location>
    <ligand>
        <name>Mn(2+)</name>
        <dbReference type="ChEBI" id="CHEBI:29035"/>
        <label>1</label>
    </ligand>
</feature>
<feature type="binding site" evidence="1">
    <location>
        <position position="450"/>
    </location>
    <ligand>
        <name>substrate</name>
    </ligand>
</feature>
<feature type="binding site" evidence="1">
    <location>
        <position position="474"/>
    </location>
    <ligand>
        <name>Mn(2+)</name>
        <dbReference type="ChEBI" id="CHEBI:29035"/>
        <label>1</label>
    </ligand>
</feature>
<feature type="binding site" evidence="1">
    <location>
        <position position="474"/>
    </location>
    <ligand>
        <name>Mn(2+)</name>
        <dbReference type="ChEBI" id="CHEBI:29035"/>
        <label>2</label>
    </ligand>
</feature>
<feature type="binding site" evidence="1">
    <location>
        <position position="474"/>
    </location>
    <ligand>
        <name>substrate</name>
    </ligand>
</feature>
<feature type="splice variant" id="VSP_040145" description="In isoform 2." evidence="4">
    <original>FTAPQAELYEAVLEIQRACLTLCSPGTSLENIYS</original>
    <variation>LLENTALIMLAITSGWMSMTLQTCLGHSLCSLEW</variation>
    <location>
        <begin position="353"/>
        <end position="386"/>
    </location>
</feature>
<feature type="splice variant" id="VSP_040146" description="In isoform 2." evidence="4">
    <location>
        <begin position="387"/>
        <end position="506"/>
    </location>
</feature>
<protein>
    <recommendedName>
        <fullName evidence="6">Xaa-Pro aminopeptidase 3</fullName>
        <shortName>X-Pro aminopeptidase 3</shortName>
        <ecNumber>3.4.11.9</ecNumber>
    </recommendedName>
    <alternativeName>
        <fullName>Aminopeptidase P3</fullName>
        <shortName>APP3</shortName>
    </alternativeName>
</protein>
<comment type="function">
    <text evidence="1">Catalyzes the removal of a penultimate prolyl residue from the N-termini of peptides, such as Leu-Pro-Ala. Also shows low activity towards peptides with Ala or Ser at the P1 position. Promotes TNFRSF1B-mediated phosphorylation of MAPK8/JNK1 and MAPK9/JNK2, suggesting a function as an adapter protein for TNFRSF1B; the effect is independent of XPNPEP3 peptidase activity. May inhibit apoptotic cell death induced via TNF-TNFRSF1B signaling.</text>
</comment>
<comment type="catalytic activity">
    <reaction evidence="1">
        <text>Release of any N-terminal amino acid, including proline, that is linked to proline, even from a dipeptide or tripeptide.</text>
        <dbReference type="EC" id="3.4.11.9"/>
    </reaction>
</comment>
<comment type="cofactor">
    <cofactor evidence="1">
        <name>Mn(2+)</name>
        <dbReference type="ChEBI" id="CHEBI:29035"/>
    </cofactor>
    <text evidence="1">Binds 2 manganese ions per subunit.</text>
</comment>
<comment type="subunit">
    <text evidence="1">Homodimer. Interacts with TNFRSF1B/TNFR2 (activated) and TRAF2.</text>
</comment>
<comment type="subcellular location">
    <subcellularLocation>
        <location evidence="1">Mitochondrion</location>
    </subcellularLocation>
    <subcellularLocation>
        <location evidence="1">Cytoplasm</location>
    </subcellularLocation>
    <text evidence="1">Mainly mitochondrial. Translocates to the cytoplasm following TNFRSF1B activation.</text>
</comment>
<comment type="alternative products">
    <event type="alternative splicing"/>
    <isoform>
        <id>B7ZMP1-1</id>
        <name>1</name>
        <sequence type="displayed"/>
    </isoform>
    <isoform>
        <id>B7ZMP1-2</id>
        <name>2</name>
        <sequence type="described" ref="VSP_040145 VSP_040146"/>
    </isoform>
</comment>
<comment type="tissue specificity">
    <text evidence="3">Expressed in brain, kidney, heart, liver, skeletal muscle and testis.</text>
</comment>
<comment type="similarity">
    <text evidence="5">Belongs to the peptidase M24B family.</text>
</comment>
<evidence type="ECO:0000250" key="1">
    <source>
        <dbReference type="UniProtKB" id="Q9NQH7"/>
    </source>
</evidence>
<evidence type="ECO:0000255" key="2"/>
<evidence type="ECO:0000269" key="3">
    <source>
    </source>
</evidence>
<evidence type="ECO:0000303" key="4">
    <source>
    </source>
</evidence>
<evidence type="ECO:0000305" key="5"/>
<evidence type="ECO:0000312" key="6">
    <source>
        <dbReference type="MGI" id="MGI:2445217"/>
    </source>
</evidence>
<keyword id="KW-0025">Alternative splicing</keyword>
<keyword id="KW-0963">Cytoplasm</keyword>
<keyword id="KW-0378">Hydrolase</keyword>
<keyword id="KW-0464">Manganese</keyword>
<keyword id="KW-0479">Metal-binding</keyword>
<keyword id="KW-0496">Mitochondrion</keyword>
<keyword id="KW-1185">Reference proteome</keyword>
<keyword id="KW-0809">Transit peptide</keyword>
<gene>
    <name type="primary">Xpnpep3</name>
</gene>
<proteinExistence type="evidence at protein level"/>
<accession>B7ZMP1</accession>
<accession>Q8BHT9</accession>
<reference key="1">
    <citation type="journal article" date="2005" name="Science">
        <title>The transcriptional landscape of the mammalian genome.</title>
        <authorList>
            <person name="Carninci P."/>
            <person name="Kasukawa T."/>
            <person name="Katayama S."/>
            <person name="Gough J."/>
            <person name="Frith M.C."/>
            <person name="Maeda N."/>
            <person name="Oyama R."/>
            <person name="Ravasi T."/>
            <person name="Lenhard B."/>
            <person name="Wells C."/>
            <person name="Kodzius R."/>
            <person name="Shimokawa K."/>
            <person name="Bajic V.B."/>
            <person name="Brenner S.E."/>
            <person name="Batalov S."/>
            <person name="Forrest A.R."/>
            <person name="Zavolan M."/>
            <person name="Davis M.J."/>
            <person name="Wilming L.G."/>
            <person name="Aidinis V."/>
            <person name="Allen J.E."/>
            <person name="Ambesi-Impiombato A."/>
            <person name="Apweiler R."/>
            <person name="Aturaliya R.N."/>
            <person name="Bailey T.L."/>
            <person name="Bansal M."/>
            <person name="Baxter L."/>
            <person name="Beisel K.W."/>
            <person name="Bersano T."/>
            <person name="Bono H."/>
            <person name="Chalk A.M."/>
            <person name="Chiu K.P."/>
            <person name="Choudhary V."/>
            <person name="Christoffels A."/>
            <person name="Clutterbuck D.R."/>
            <person name="Crowe M.L."/>
            <person name="Dalla E."/>
            <person name="Dalrymple B.P."/>
            <person name="de Bono B."/>
            <person name="Della Gatta G."/>
            <person name="di Bernardo D."/>
            <person name="Down T."/>
            <person name="Engstrom P."/>
            <person name="Fagiolini M."/>
            <person name="Faulkner G."/>
            <person name="Fletcher C.F."/>
            <person name="Fukushima T."/>
            <person name="Furuno M."/>
            <person name="Futaki S."/>
            <person name="Gariboldi M."/>
            <person name="Georgii-Hemming P."/>
            <person name="Gingeras T.R."/>
            <person name="Gojobori T."/>
            <person name="Green R.E."/>
            <person name="Gustincich S."/>
            <person name="Harbers M."/>
            <person name="Hayashi Y."/>
            <person name="Hensch T.K."/>
            <person name="Hirokawa N."/>
            <person name="Hill D."/>
            <person name="Huminiecki L."/>
            <person name="Iacono M."/>
            <person name="Ikeo K."/>
            <person name="Iwama A."/>
            <person name="Ishikawa T."/>
            <person name="Jakt M."/>
            <person name="Kanapin A."/>
            <person name="Katoh M."/>
            <person name="Kawasawa Y."/>
            <person name="Kelso J."/>
            <person name="Kitamura H."/>
            <person name="Kitano H."/>
            <person name="Kollias G."/>
            <person name="Krishnan S.P."/>
            <person name="Kruger A."/>
            <person name="Kummerfeld S.K."/>
            <person name="Kurochkin I.V."/>
            <person name="Lareau L.F."/>
            <person name="Lazarevic D."/>
            <person name="Lipovich L."/>
            <person name="Liu J."/>
            <person name="Liuni S."/>
            <person name="McWilliam S."/>
            <person name="Madan Babu M."/>
            <person name="Madera M."/>
            <person name="Marchionni L."/>
            <person name="Matsuda H."/>
            <person name="Matsuzawa S."/>
            <person name="Miki H."/>
            <person name="Mignone F."/>
            <person name="Miyake S."/>
            <person name="Morris K."/>
            <person name="Mottagui-Tabar S."/>
            <person name="Mulder N."/>
            <person name="Nakano N."/>
            <person name="Nakauchi H."/>
            <person name="Ng P."/>
            <person name="Nilsson R."/>
            <person name="Nishiguchi S."/>
            <person name="Nishikawa S."/>
            <person name="Nori F."/>
            <person name="Ohara O."/>
            <person name="Okazaki Y."/>
            <person name="Orlando V."/>
            <person name="Pang K.C."/>
            <person name="Pavan W.J."/>
            <person name="Pavesi G."/>
            <person name="Pesole G."/>
            <person name="Petrovsky N."/>
            <person name="Piazza S."/>
            <person name="Reed J."/>
            <person name="Reid J.F."/>
            <person name="Ring B.Z."/>
            <person name="Ringwald M."/>
            <person name="Rost B."/>
            <person name="Ruan Y."/>
            <person name="Salzberg S.L."/>
            <person name="Sandelin A."/>
            <person name="Schneider C."/>
            <person name="Schoenbach C."/>
            <person name="Sekiguchi K."/>
            <person name="Semple C.A."/>
            <person name="Seno S."/>
            <person name="Sessa L."/>
            <person name="Sheng Y."/>
            <person name="Shibata Y."/>
            <person name="Shimada H."/>
            <person name="Shimada K."/>
            <person name="Silva D."/>
            <person name="Sinclair B."/>
            <person name="Sperling S."/>
            <person name="Stupka E."/>
            <person name="Sugiura K."/>
            <person name="Sultana R."/>
            <person name="Takenaka Y."/>
            <person name="Taki K."/>
            <person name="Tammoja K."/>
            <person name="Tan S.L."/>
            <person name="Tang S."/>
            <person name="Taylor M.S."/>
            <person name="Tegner J."/>
            <person name="Teichmann S.A."/>
            <person name="Ueda H.R."/>
            <person name="van Nimwegen E."/>
            <person name="Verardo R."/>
            <person name="Wei C.L."/>
            <person name="Yagi K."/>
            <person name="Yamanishi H."/>
            <person name="Zabarovsky E."/>
            <person name="Zhu S."/>
            <person name="Zimmer A."/>
            <person name="Hide W."/>
            <person name="Bult C."/>
            <person name="Grimmond S.M."/>
            <person name="Teasdale R.D."/>
            <person name="Liu E.T."/>
            <person name="Brusic V."/>
            <person name="Quackenbush J."/>
            <person name="Wahlestedt C."/>
            <person name="Mattick J.S."/>
            <person name="Hume D.A."/>
            <person name="Kai C."/>
            <person name="Sasaki D."/>
            <person name="Tomaru Y."/>
            <person name="Fukuda S."/>
            <person name="Kanamori-Katayama M."/>
            <person name="Suzuki M."/>
            <person name="Aoki J."/>
            <person name="Arakawa T."/>
            <person name="Iida J."/>
            <person name="Imamura K."/>
            <person name="Itoh M."/>
            <person name="Kato T."/>
            <person name="Kawaji H."/>
            <person name="Kawagashira N."/>
            <person name="Kawashima T."/>
            <person name="Kojima M."/>
            <person name="Kondo S."/>
            <person name="Konno H."/>
            <person name="Nakano K."/>
            <person name="Ninomiya N."/>
            <person name="Nishio T."/>
            <person name="Okada M."/>
            <person name="Plessy C."/>
            <person name="Shibata K."/>
            <person name="Shiraki T."/>
            <person name="Suzuki S."/>
            <person name="Tagami M."/>
            <person name="Waki K."/>
            <person name="Watahiki A."/>
            <person name="Okamura-Oho Y."/>
            <person name="Suzuki H."/>
            <person name="Kawai J."/>
            <person name="Hayashizaki Y."/>
        </authorList>
    </citation>
    <scope>NUCLEOTIDE SEQUENCE [LARGE SCALE MRNA] (ISOFORM 2)</scope>
    <source>
        <strain>NOD</strain>
        <tissue>Thymus</tissue>
    </source>
</reference>
<reference key="2">
    <citation type="submission" date="2005-09" db="EMBL/GenBank/DDBJ databases">
        <authorList>
            <person name="Mural R.J."/>
            <person name="Adams M.D."/>
            <person name="Myers E.W."/>
            <person name="Smith H.O."/>
            <person name="Venter J.C."/>
        </authorList>
    </citation>
    <scope>NUCLEOTIDE SEQUENCE [LARGE SCALE GENOMIC DNA]</scope>
</reference>
<reference key="3">
    <citation type="journal article" date="2004" name="Genome Res.">
        <title>The status, quality, and expansion of the NIH full-length cDNA project: the Mammalian Gene Collection (MGC).</title>
        <authorList>
            <consortium name="The MGC Project Team"/>
        </authorList>
    </citation>
    <scope>NUCLEOTIDE SEQUENCE [LARGE SCALE MRNA] (ISOFORM 1)</scope>
    <source>
        <tissue>Brain</tissue>
    </source>
</reference>
<reference key="4">
    <citation type="journal article" date="2010" name="Cell">
        <title>A tissue-specific atlas of mouse protein phosphorylation and expression.</title>
        <authorList>
            <person name="Huttlin E.L."/>
            <person name="Jedrychowski M.P."/>
            <person name="Elias J.E."/>
            <person name="Goswami T."/>
            <person name="Rad R."/>
            <person name="Beausoleil S.A."/>
            <person name="Villen J."/>
            <person name="Haas W."/>
            <person name="Sowa M.E."/>
            <person name="Gygi S.P."/>
        </authorList>
    </citation>
    <scope>IDENTIFICATION BY MASS SPECTROMETRY [LARGE SCALE ANALYSIS]</scope>
    <source>
        <tissue>Brown adipose tissue</tissue>
        <tissue>Kidney</tissue>
        <tissue>Liver</tissue>
        <tissue>Testis</tissue>
    </source>
</reference>
<reference key="5">
    <citation type="journal article" date="2010" name="J. Clin. Invest.">
        <title>Individuals with mutations in XPNPEP3, which encodes a mitochondrial protein, develop a nephronophthisis-like nephropathy.</title>
        <authorList>
            <person name="O'Toole J.F."/>
            <person name="Liu Y."/>
            <person name="Davis E.E."/>
            <person name="Westlake C.J."/>
            <person name="Attanasio M."/>
            <person name="Otto E.A."/>
            <person name="Seelow D."/>
            <person name="Nurnberg G."/>
            <person name="Becker C."/>
            <person name="Nuutinen M."/>
            <person name="Karppa M."/>
            <person name="Ignatius J."/>
            <person name="Uusimaa J."/>
            <person name="Pakanen S."/>
            <person name="Jaakkola E."/>
            <person name="van den Heuvel L.P."/>
            <person name="Fehrenbach H."/>
            <person name="Wiggins R."/>
            <person name="Goyal M."/>
            <person name="Zhou W."/>
            <person name="Wolf M.T."/>
            <person name="Wise E."/>
            <person name="Helou J."/>
            <person name="Allen S.J."/>
            <person name="Murga-Zamalloa C.A."/>
            <person name="Ashraf S."/>
            <person name="Chaki M."/>
            <person name="Heeringa S."/>
            <person name="Chernin G."/>
            <person name="Hoskins B.E."/>
            <person name="Chaib H."/>
            <person name="Gleeson J."/>
            <person name="Kusakabe T."/>
            <person name="Suzuki T."/>
            <person name="Isaac R.E."/>
            <person name="Quarmby L.M."/>
            <person name="Tennant B."/>
            <person name="Fujioka H."/>
            <person name="Tuominen H."/>
            <person name="Hassinen I."/>
            <person name="Lohi H."/>
            <person name="van Houten J.L."/>
            <person name="Rotig A."/>
            <person name="Sayer J.A."/>
            <person name="Rolinski B."/>
            <person name="Freisinger P."/>
            <person name="Madhavan S.M."/>
            <person name="Herzer M."/>
            <person name="Madignier F."/>
            <person name="Prokisch H."/>
            <person name="Nurnberg P."/>
            <person name="Jackson P.K."/>
            <person name="Khanna H."/>
            <person name="Katsanis N."/>
            <person name="Hildebrandt F."/>
        </authorList>
    </citation>
    <scope>SUBCELLULAR LOCATION</scope>
    <scope>TISSUE SPECIFICITY</scope>
</reference>
<reference key="6">
    <citation type="journal article" date="2010" name="J. Clin. Invest.">
        <authorList>
            <person name="O'Toole J.F."/>
            <person name="Liu Y."/>
            <person name="Davis E.E."/>
            <person name="Westlake C.J."/>
            <person name="Attanasio M."/>
            <person name="Otto E.A."/>
            <person name="Seelow D."/>
            <person name="Nurnberg G."/>
            <person name="Becker C."/>
            <person name="Nuutinen M."/>
            <person name="Karppa M."/>
            <person name="Ignatius J."/>
            <person name="Uusimaa J."/>
            <person name="Pakanen S."/>
            <person name="Jaakkola E."/>
            <person name="van den Heuvel L.P."/>
            <person name="Fehrenbach H."/>
            <person name="Wiggins R."/>
            <person name="Goyal M."/>
            <person name="Zhou W."/>
            <person name="Wolf M.T."/>
            <person name="Wise E."/>
            <person name="Helou J."/>
            <person name="Allen S.J."/>
            <person name="Murga-Zamalloa C.A."/>
            <person name="Ashraf S."/>
            <person name="Chaki M."/>
            <person name="Heeringa S."/>
            <person name="Chernin G."/>
            <person name="Hoskins B.E."/>
            <person name="Chaib H."/>
            <person name="Gleeson J."/>
            <person name="Kusakabe T."/>
            <person name="Suzuki T."/>
            <person name="Isaac R.E."/>
            <person name="Quarmby L.M."/>
            <person name="Tennant B."/>
            <person name="Fujioka H."/>
            <person name="Tuominen H."/>
            <person name="Hassinen I."/>
            <person name="Lohi H."/>
            <person name="van Houten J.L."/>
            <person name="Rotig A."/>
            <person name="Sayer J.A."/>
            <person name="Rolinski B."/>
            <person name="Freisinger P."/>
            <person name="Madhavan S.M."/>
            <person name="Herzer M."/>
            <person name="Madignier F."/>
            <person name="Prokisch H."/>
            <person name="Nurnberg P."/>
            <person name="Jackson P.K."/>
            <person name="Khanna H."/>
            <person name="Katsanis N."/>
            <person name="Hildebrandt F."/>
        </authorList>
    </citation>
    <scope>ERRATUM OF PUBMED:20179356</scope>
</reference>
<sequence length="506" mass="56677">MPSLLSTPKLAPVLARLRGLSGCMSCLQRRYSLQPAPVKKIPNRYLGQPSPVTHPHLLRPGEVTPGLSQVEYALRRHKLMALVHKEAQGHSGTDHTVVVLSNPTYYMSNDIPYTFHQDNNFLYLCGFQEPDSILVLQSFSGKQLPSHKAMLFVPRRDPGRELWDGPRSGTDGAIALTGVDEAYPLEEFQHLLPKLRAETNMVWYDWMKPSHAQLHSDYMQPLTEAKARSKNKVRSVQQLIQRLRLVKSPSEIKRMQIAGKLTSEAFIETMFASKAPIDEAFLYAKFEFECRARGADILAYPPVVAGGNRSNTLHYVKNNQLIKDGEMVLLDGGCESSCYVSDITRTWPVNGRFTAPQAELYEAVLEIQRACLTLCSPGTSLENIYSMMLTLIGQKLKDLGITKTSKESAFKAARKYCPHHVGHYLGMDVHDTPDMPRSLPLQPGMVITVEPGIYIPEDDRDAPEKFRGLGVRIEDDVVVTQDSPLILSADCPKEMNDIEQICSRTS</sequence>